<protein>
    <recommendedName>
        <fullName evidence="4">Receptor like protein 28</fullName>
        <shortName evidence="4">AtRLP28</shortName>
    </recommendedName>
</protein>
<accession>O49325</accession>
<dbReference type="EMBL" id="AC002334">
    <property type="protein sequence ID" value="AAC04912.1"/>
    <property type="status" value="ALT_SEQ"/>
    <property type="molecule type" value="Genomic_DNA"/>
</dbReference>
<dbReference type="EMBL" id="CP002685">
    <property type="protein sequence ID" value="AEC08783.1"/>
    <property type="status" value="ALT_SEQ"/>
    <property type="molecule type" value="Genomic_DNA"/>
</dbReference>
<dbReference type="PIR" id="B84741">
    <property type="entry name" value="B84741"/>
</dbReference>
<dbReference type="RefSeq" id="NP_180867.1">
    <property type="nucleotide sequence ID" value="NM_128868.2"/>
</dbReference>
<dbReference type="SMR" id="O49325"/>
<dbReference type="STRING" id="3702.O49325"/>
<dbReference type="GlyCosmos" id="O49325">
    <property type="glycosylation" value="19 sites, No reported glycans"/>
</dbReference>
<dbReference type="GlyGen" id="O49325">
    <property type="glycosylation" value="19 sites"/>
</dbReference>
<dbReference type="PaxDb" id="3702-AT2G33080.1"/>
<dbReference type="PeptideAtlas" id="O49325"/>
<dbReference type="GeneID" id="817870"/>
<dbReference type="KEGG" id="ath:AT2G33080"/>
<dbReference type="Araport" id="AT2G33080"/>
<dbReference type="TAIR" id="AT2G33080"/>
<dbReference type="eggNOG" id="KOG0619">
    <property type="taxonomic scope" value="Eukaryota"/>
</dbReference>
<dbReference type="HOGENOM" id="CLU_000288_18_3_1"/>
<dbReference type="InParanoid" id="O49325"/>
<dbReference type="PhylomeDB" id="O49325"/>
<dbReference type="PRO" id="PR:O49325"/>
<dbReference type="Proteomes" id="UP000006548">
    <property type="component" value="Chromosome 2"/>
</dbReference>
<dbReference type="ExpressionAtlas" id="O49325">
    <property type="expression patterns" value="baseline and differential"/>
</dbReference>
<dbReference type="GO" id="GO:0005886">
    <property type="term" value="C:plasma membrane"/>
    <property type="evidence" value="ECO:0007669"/>
    <property type="project" value="UniProtKB-SubCell"/>
</dbReference>
<dbReference type="GO" id="GO:0010555">
    <property type="term" value="P:response to mannitol"/>
    <property type="evidence" value="ECO:0000315"/>
    <property type="project" value="UniProtKB"/>
</dbReference>
<dbReference type="GO" id="GO:0009651">
    <property type="term" value="P:response to salt stress"/>
    <property type="evidence" value="ECO:0000315"/>
    <property type="project" value="UniProtKB"/>
</dbReference>
<dbReference type="FunFam" id="3.80.10.10:FF:000383">
    <property type="entry name" value="Leucine-rich repeat receptor protein kinase EMS1"/>
    <property type="match status" value="1"/>
</dbReference>
<dbReference type="FunFam" id="3.80.10.10:FF:000095">
    <property type="entry name" value="LRR receptor-like serine/threonine-protein kinase GSO1"/>
    <property type="match status" value="1"/>
</dbReference>
<dbReference type="FunFam" id="3.80.10.10:FF:002352">
    <property type="entry name" value="Receptor like protein 28"/>
    <property type="match status" value="1"/>
</dbReference>
<dbReference type="Gene3D" id="3.80.10.10">
    <property type="entry name" value="Ribonuclease Inhibitor"/>
    <property type="match status" value="3"/>
</dbReference>
<dbReference type="InterPro" id="IPR001611">
    <property type="entry name" value="Leu-rich_rpt"/>
</dbReference>
<dbReference type="InterPro" id="IPR003591">
    <property type="entry name" value="Leu-rich_rpt_typical-subtyp"/>
</dbReference>
<dbReference type="InterPro" id="IPR032675">
    <property type="entry name" value="LRR_dom_sf"/>
</dbReference>
<dbReference type="InterPro" id="IPR046956">
    <property type="entry name" value="RLP23-like"/>
</dbReference>
<dbReference type="PANTHER" id="PTHR48061">
    <property type="entry name" value="LEUCINE-RICH REPEAT RECEPTOR PROTEIN KINASE EMS1-LIKE-RELATED"/>
    <property type="match status" value="1"/>
</dbReference>
<dbReference type="PANTHER" id="PTHR48061:SF46">
    <property type="entry name" value="LEUCINE-RICH REPEAT-CONTAINING N-TERMINAL PLANT-TYPE DOMAIN-CONTAINING PROTEIN"/>
    <property type="match status" value="1"/>
</dbReference>
<dbReference type="Pfam" id="PF00560">
    <property type="entry name" value="LRR_1"/>
    <property type="match status" value="3"/>
</dbReference>
<dbReference type="Pfam" id="PF13516">
    <property type="entry name" value="LRR_6"/>
    <property type="match status" value="1"/>
</dbReference>
<dbReference type="Pfam" id="PF13855">
    <property type="entry name" value="LRR_8"/>
    <property type="match status" value="2"/>
</dbReference>
<dbReference type="SMART" id="SM00365">
    <property type="entry name" value="LRR_SD22"/>
    <property type="match status" value="5"/>
</dbReference>
<dbReference type="SMART" id="SM00369">
    <property type="entry name" value="LRR_TYP"/>
    <property type="match status" value="9"/>
</dbReference>
<dbReference type="SUPFAM" id="SSF52058">
    <property type="entry name" value="L domain-like"/>
    <property type="match status" value="2"/>
</dbReference>
<reference key="1">
    <citation type="journal article" date="1999" name="Nature">
        <title>Sequence and analysis of chromosome 2 of the plant Arabidopsis thaliana.</title>
        <authorList>
            <person name="Lin X."/>
            <person name="Kaul S."/>
            <person name="Rounsley S.D."/>
            <person name="Shea T.P."/>
            <person name="Benito M.-I."/>
            <person name="Town C.D."/>
            <person name="Fujii C.Y."/>
            <person name="Mason T.M."/>
            <person name="Bowman C.L."/>
            <person name="Barnstead M.E."/>
            <person name="Feldblyum T.V."/>
            <person name="Buell C.R."/>
            <person name="Ketchum K.A."/>
            <person name="Lee J.J."/>
            <person name="Ronning C.M."/>
            <person name="Koo H.L."/>
            <person name="Moffat K.S."/>
            <person name="Cronin L.A."/>
            <person name="Shen M."/>
            <person name="Pai G."/>
            <person name="Van Aken S."/>
            <person name="Umayam L."/>
            <person name="Tallon L.J."/>
            <person name="Gill J.E."/>
            <person name="Adams M.D."/>
            <person name="Carrera A.J."/>
            <person name="Creasy T.H."/>
            <person name="Goodman H.M."/>
            <person name="Somerville C.R."/>
            <person name="Copenhaver G.P."/>
            <person name="Preuss D."/>
            <person name="Nierman W.C."/>
            <person name="White O."/>
            <person name="Eisen J.A."/>
            <person name="Salzberg S.L."/>
            <person name="Fraser C.M."/>
            <person name="Venter J.C."/>
        </authorList>
    </citation>
    <scope>NUCLEOTIDE SEQUENCE [LARGE SCALE GENOMIC DNA]</scope>
    <source>
        <strain>cv. Columbia</strain>
    </source>
</reference>
<reference key="2">
    <citation type="journal article" date="2017" name="Plant J.">
        <title>Araport11: a complete reannotation of the Arabidopsis thaliana reference genome.</title>
        <authorList>
            <person name="Cheng C.Y."/>
            <person name="Krishnakumar V."/>
            <person name="Chan A.P."/>
            <person name="Thibaud-Nissen F."/>
            <person name="Schobel S."/>
            <person name="Town C.D."/>
        </authorList>
    </citation>
    <scope>GENOME REANNOTATION</scope>
    <source>
        <strain>cv. Columbia</strain>
    </source>
</reference>
<reference key="3">
    <citation type="journal article" date="2005" name="Plant Physiol.">
        <title>Phylogenomic analysis of the receptor-like proteins of rice and Arabidopsis.</title>
        <authorList>
            <person name="Fritz-Laylin L.K."/>
            <person name="Krishnamurthy N."/>
            <person name="Toer M."/>
            <person name="Sjoelander K.V."/>
            <person name="Jones J.D."/>
        </authorList>
    </citation>
    <scope>GENE FAMILY</scope>
</reference>
<reference key="4">
    <citation type="journal article" date="2008" name="Plant Physiol.">
        <title>A genome-wide functional investigation into the roles of receptor-like proteins in Arabidopsis.</title>
        <authorList>
            <person name="Wang G."/>
            <person name="Ellendorff U."/>
            <person name="Kemp B."/>
            <person name="Mansfield J.W."/>
            <person name="Forsyth A."/>
            <person name="Mitchell K."/>
            <person name="Bastas K."/>
            <person name="Liu C.-M."/>
            <person name="Woods-Toer A."/>
            <person name="Zipfel C."/>
            <person name="de Wit P.J.G.M."/>
            <person name="Jones J.D.G."/>
            <person name="Toer M."/>
            <person name="Thomma B.P.H.J."/>
        </authorList>
    </citation>
    <scope>GENE FAMILY</scope>
    <scope>NOMENCLATURE</scope>
</reference>
<reference key="5">
    <citation type="journal article" date="2016" name="J. Exp. Bot.">
        <title>Transcriptional regulation of receptor-like protein genes by environmental stresses and hormones and their overexpression activities in Arabidopsis thaliana.</title>
        <authorList>
            <person name="Wu J."/>
            <person name="Liu Z."/>
            <person name="Zhang Z."/>
            <person name="Lv Y."/>
            <person name="Yang N."/>
            <person name="Zhang G."/>
            <person name="Wu M."/>
            <person name="Lv S."/>
            <person name="Pan L."/>
            <person name="Joosten M.H."/>
            <person name="Wang G."/>
        </authorList>
    </citation>
    <scope>INDUCTION BY NACL AND MANNITOL</scope>
</reference>
<feature type="signal peptide" evidence="1">
    <location>
        <begin position="1"/>
        <end position="24"/>
    </location>
</feature>
<feature type="chain" id="PRO_5011945116" description="Receptor like protein 28">
    <location>
        <begin position="25"/>
        <end position="778"/>
    </location>
</feature>
<feature type="topological domain" description="Extracellular" evidence="1">
    <location>
        <begin position="25"/>
        <end position="739"/>
    </location>
</feature>
<feature type="transmembrane region" description="Helical" evidence="1">
    <location>
        <begin position="740"/>
        <end position="760"/>
    </location>
</feature>
<feature type="topological domain" description="Cytoplasmic" evidence="1">
    <location>
        <begin position="761"/>
        <end position="778"/>
    </location>
</feature>
<feature type="repeat" description="LRR 1" evidence="1">
    <location>
        <begin position="99"/>
        <end position="123"/>
    </location>
</feature>
<feature type="repeat" description="LRR 2" evidence="1">
    <location>
        <begin position="125"/>
        <end position="147"/>
    </location>
</feature>
<feature type="repeat" description="LRR 3" evidence="1">
    <location>
        <begin position="148"/>
        <end position="171"/>
    </location>
</feature>
<feature type="repeat" description="LRR 4" evidence="1">
    <location>
        <begin position="172"/>
        <end position="195"/>
    </location>
</feature>
<feature type="repeat" description="LRR 5" evidence="1">
    <location>
        <begin position="197"/>
        <end position="219"/>
    </location>
</feature>
<feature type="repeat" description="LRR 6; degenerate" evidence="5">
    <location>
        <begin position="220"/>
        <end position="240"/>
    </location>
</feature>
<feature type="repeat" description="LRR 7" evidence="1">
    <location>
        <begin position="241"/>
        <end position="265"/>
    </location>
</feature>
<feature type="repeat" description="LRR 8" evidence="1">
    <location>
        <begin position="266"/>
        <end position="291"/>
    </location>
</feature>
<feature type="repeat" description="LRR 9" evidence="1">
    <location>
        <begin position="293"/>
        <end position="313"/>
    </location>
</feature>
<feature type="repeat" description="LRR 10" evidence="1">
    <location>
        <begin position="314"/>
        <end position="338"/>
    </location>
</feature>
<feature type="repeat" description="LRR 11" evidence="1">
    <location>
        <begin position="340"/>
        <end position="363"/>
    </location>
</feature>
<feature type="repeat" description="LRR 12" evidence="1">
    <location>
        <begin position="364"/>
        <end position="387"/>
    </location>
</feature>
<feature type="repeat" description="LRR 13; degenerate" evidence="5">
    <location>
        <begin position="388"/>
        <end position="407"/>
    </location>
</feature>
<feature type="repeat" description="LRR 14" evidence="1">
    <location>
        <begin position="408"/>
        <end position="429"/>
    </location>
</feature>
<feature type="repeat" description="LRR 15" evidence="1">
    <location>
        <begin position="430"/>
        <end position="453"/>
    </location>
</feature>
<feature type="repeat" description="LRR 16" evidence="1">
    <location>
        <begin position="455"/>
        <end position="477"/>
    </location>
</feature>
<feature type="repeat" description="LRR 17" evidence="1">
    <location>
        <begin position="479"/>
        <end position="500"/>
    </location>
</feature>
<feature type="repeat" description="LRR 18" evidence="1">
    <location>
        <begin position="501"/>
        <end position="525"/>
    </location>
</feature>
<feature type="repeat" description="LRR 19" evidence="1">
    <location>
        <begin position="528"/>
        <end position="552"/>
    </location>
</feature>
<feature type="repeat" description="LRR 20" evidence="1">
    <location>
        <begin position="601"/>
        <end position="625"/>
    </location>
</feature>
<feature type="repeat" description="LRR 21" evidence="1">
    <location>
        <begin position="626"/>
        <end position="649"/>
    </location>
</feature>
<feature type="repeat" description="LRR 22" evidence="1">
    <location>
        <begin position="650"/>
        <end position="673"/>
    </location>
</feature>
<feature type="repeat" description="LRR 23" evidence="1">
    <location>
        <begin position="678"/>
        <end position="700"/>
    </location>
</feature>
<feature type="glycosylation site" description="N-linked (GlcNAc...) asparagine" evidence="2">
    <location>
        <position position="60"/>
    </location>
</feature>
<feature type="glycosylation site" description="N-linked (GlcNAc...) asparagine" evidence="2">
    <location>
        <position position="72"/>
    </location>
</feature>
<feature type="glycosylation site" description="N-linked (GlcNAc...) asparagine" evidence="2">
    <location>
        <position position="93"/>
    </location>
</feature>
<feature type="glycosylation site" description="N-linked (GlcNAc...) asparagine" evidence="2">
    <location>
        <position position="106"/>
    </location>
</feature>
<feature type="glycosylation site" description="N-linked (GlcNAc...) asparagine" evidence="2">
    <location>
        <position position="111"/>
    </location>
</feature>
<feature type="glycosylation site" description="N-linked (GlcNAc...) asparagine" evidence="2">
    <location>
        <position position="147"/>
    </location>
</feature>
<feature type="glycosylation site" description="N-linked (GlcNAc...) asparagine" evidence="2">
    <location>
        <position position="170"/>
    </location>
</feature>
<feature type="glycosylation site" description="N-linked (GlcNAc...) asparagine" evidence="2">
    <location>
        <position position="173"/>
    </location>
</feature>
<feature type="glycosylation site" description="N-linked (GlcNAc...) asparagine" evidence="2">
    <location>
        <position position="253"/>
    </location>
</feature>
<feature type="glycosylation site" description="N-linked (GlcNAc...) asparagine" evidence="2">
    <location>
        <position position="348"/>
    </location>
</feature>
<feature type="glycosylation site" description="N-linked (GlcNAc...) asparagine" evidence="2">
    <location>
        <position position="363"/>
    </location>
</feature>
<feature type="glycosylation site" description="N-linked (GlcNAc...) asparagine" evidence="2">
    <location>
        <position position="396"/>
    </location>
</feature>
<feature type="glycosylation site" description="N-linked (GlcNAc...) asparagine" evidence="2">
    <location>
        <position position="407"/>
    </location>
</feature>
<feature type="glycosylation site" description="N-linked (GlcNAc...) asparagine" evidence="2">
    <location>
        <position position="420"/>
    </location>
</feature>
<feature type="glycosylation site" description="N-linked (GlcNAc...) asparagine" evidence="2">
    <location>
        <position position="431"/>
    </location>
</feature>
<feature type="glycosylation site" description="N-linked (GlcNAc...) asparagine" evidence="2">
    <location>
        <position position="476"/>
    </location>
</feature>
<feature type="glycosylation site" description="N-linked (GlcNAc...) asparagine" evidence="2">
    <location>
        <position position="632"/>
    </location>
</feature>
<feature type="glycosylation site" description="N-linked (GlcNAc...) asparagine" evidence="2">
    <location>
        <position position="648"/>
    </location>
</feature>
<feature type="glycosylation site" description="N-linked (GlcNAc...) asparagine" evidence="2">
    <location>
        <position position="680"/>
    </location>
</feature>
<organism>
    <name type="scientific">Arabidopsis thaliana</name>
    <name type="common">Mouse-ear cress</name>
    <dbReference type="NCBI Taxonomy" id="3702"/>
    <lineage>
        <taxon>Eukaryota</taxon>
        <taxon>Viridiplantae</taxon>
        <taxon>Streptophyta</taxon>
        <taxon>Embryophyta</taxon>
        <taxon>Tracheophyta</taxon>
        <taxon>Spermatophyta</taxon>
        <taxon>Magnoliopsida</taxon>
        <taxon>eudicotyledons</taxon>
        <taxon>Gunneridae</taxon>
        <taxon>Pentapetalae</taxon>
        <taxon>rosids</taxon>
        <taxon>malvids</taxon>
        <taxon>Brassicales</taxon>
        <taxon>Brassicaceae</taxon>
        <taxon>Camelineae</taxon>
        <taxon>Arabidopsis</taxon>
    </lineage>
</organism>
<sequence>MSGSHLRLRFLSLLLLCCVSSSTSSLFTFSYPVLDLVACRSHQIQAFTQFKNEFDTHRCNHSDHSNGVWCDNSTGVVTKLQLNACLSGTLNPNSSLFWFHQLRFLNLSHNNFTSTSFPSEFGNLNKVEVLDLSFNSFTGQVPSSFSNLSQLTELHLSNNQLTGGFPQVQNLTNLSHLDFENNKFSGTVPSSLLMMPFLSYLNLYGNHFTGSIEVSTSSKLEILYLGLKPFEGQILEPISKLINLKRLELSFLNISYPLDLNLFSSLKSLTYLDLSGNSISPRSLRSDLYIPLTLEKLLLEQCGIIEFPNILKTLQKLEYIDMSNNRINGKIPEWLWRLPRLRSMSLANNSFNGFEGSTDVLVNSSMEILFMHSNNIQGALPNLPLSIKAFSAGYNNFSGEIPLSICNRSSLAALSLPYNNFTGKIPQCLSNLTFVHLRKNNLEGSIPDTLCAGDSLQTLDIGFNLISGTLPRSLLNCSSLEFLSVDNNRIKDTFPFWLKALPNLQVLILSSNKLYGPIAPPHQSPLAFPELRIFEIADNMFTGTLSPRYFVNWKTSSLTVNEDGDLYMVYKNNAFGIDSYVYRDTIDMKYKGLSMEQQMVLNSYSAIDFSGNRLEGQIPKSIGLLKELIALNLSNNAFTCHIPLSLANATELESLDLSRNQLSGTIPNGLKTLSFLAYINVSHNKLKGTQIIGQHKSSFEGNAGLCGLPLEETCSGKNAPPTQQPKEEDEEQEQVLNWKAVATGYGTGLLLGLAIAQVIASYKPDWLVKIIGLFRFCF</sequence>
<keyword id="KW-1003">Cell membrane</keyword>
<keyword id="KW-0325">Glycoprotein</keyword>
<keyword id="KW-0433">Leucine-rich repeat</keyword>
<keyword id="KW-0472">Membrane</keyword>
<keyword id="KW-0675">Receptor</keyword>
<keyword id="KW-1185">Reference proteome</keyword>
<keyword id="KW-0677">Repeat</keyword>
<keyword id="KW-0732">Signal</keyword>
<keyword id="KW-0812">Transmembrane</keyword>
<keyword id="KW-1133">Transmembrane helix</keyword>
<gene>
    <name evidence="4" type="primary">RLP28</name>
    <name evidence="6" type="ordered locus">At2g33080</name>
    <name evidence="7" type="ORF">F25I18.18</name>
</gene>
<proteinExistence type="evidence at transcript level"/>
<evidence type="ECO:0000255" key="1"/>
<evidence type="ECO:0000255" key="2">
    <source>
        <dbReference type="PROSITE-ProRule" id="PRU00498"/>
    </source>
</evidence>
<evidence type="ECO:0000269" key="3">
    <source>
    </source>
</evidence>
<evidence type="ECO:0000303" key="4">
    <source>
    </source>
</evidence>
<evidence type="ECO:0000305" key="5"/>
<evidence type="ECO:0000312" key="6">
    <source>
        <dbReference type="Araport" id="AT2G33080"/>
    </source>
</evidence>
<evidence type="ECO:0000312" key="7">
    <source>
        <dbReference type="EMBL" id="AAC04912.1"/>
    </source>
</evidence>
<name>RLP28_ARATH</name>
<comment type="subcellular location">
    <subcellularLocation>
        <location evidence="5">Cell membrane</location>
        <topology evidence="5">Single-pass type I membrane protein</topology>
    </subcellularLocation>
</comment>
<comment type="induction">
    <text evidence="3">By NaCl and mannitol.</text>
</comment>
<comment type="similarity">
    <text evidence="5">Belongs to the RLP family.</text>
</comment>
<comment type="sequence caution" evidence="5">
    <conflict type="erroneous gene model prediction">
        <sequence resource="EMBL-CDS" id="AAC04912"/>
    </conflict>
</comment>
<comment type="sequence caution" evidence="5">
    <conflict type="erroneous gene model prediction">
        <sequence resource="EMBL-CDS" id="AEC08783"/>
    </conflict>
</comment>